<organism>
    <name type="scientific">Stenotrophomonas maltophilia (strain R551-3)</name>
    <dbReference type="NCBI Taxonomy" id="391008"/>
    <lineage>
        <taxon>Bacteria</taxon>
        <taxon>Pseudomonadati</taxon>
        <taxon>Pseudomonadota</taxon>
        <taxon>Gammaproteobacteria</taxon>
        <taxon>Lysobacterales</taxon>
        <taxon>Lysobacteraceae</taxon>
        <taxon>Stenotrophomonas</taxon>
        <taxon>Stenotrophomonas maltophilia group</taxon>
    </lineage>
</organism>
<sequence>MTADLLPVRRALLSVSDKTGLVELATALAARGVELLSTGGTAKAIRDAGLAVKDVADVTGFPEMMDGRVKTLHPMVHGGLLGRSGLDDAVMAEHGIGAIDLLVLNLYPFESVTAKADCSLADAVENIDIGGPAMLRSAAKNFARVAVATDPSQYAELLASLEANNGQLTAATRFAFSVAAFNRVAQYDAAISNYLSAVTATDTAVPVRAEYPAQMNSTFVKVMDLRYGENPHQSGAFYRDLYPVPGTLATFQQLQGKELSYNNLADADAAWECVRQFDAPACVIVKHANPCGVAVGAGNGDAYELAYATDPTSAFGGIIAFNKPLDAATAKVILDRQFVEVLIAPDYEPAALEYAQKKANVRVLRIPHGDGLNNFDNKRVGSGLLLQSSDNRGMTRDELKVVSKLAPTDKQFTDLLFAWKVAKFVKSNAIVYAKDNRTIGVGAGQMSRVYSARIAGIKAADANLVVEGSVMASDAFFPFRDGIDAAAAAGIKAVIQPGGSMRDAEVIAAADEHGLAMVFTGVRHFRH</sequence>
<protein>
    <recommendedName>
        <fullName evidence="1">Bifunctional purine biosynthesis protein PurH</fullName>
    </recommendedName>
    <domain>
        <recommendedName>
            <fullName evidence="1">Phosphoribosylaminoimidazolecarboxamide formyltransferase</fullName>
            <ecNumber evidence="1">2.1.2.3</ecNumber>
        </recommendedName>
        <alternativeName>
            <fullName evidence="1">AICAR transformylase</fullName>
        </alternativeName>
    </domain>
    <domain>
        <recommendedName>
            <fullName evidence="1">IMP cyclohydrolase</fullName>
            <ecNumber evidence="1">3.5.4.10</ecNumber>
        </recommendedName>
        <alternativeName>
            <fullName evidence="1">ATIC</fullName>
        </alternativeName>
        <alternativeName>
            <fullName evidence="1">IMP synthase</fullName>
        </alternativeName>
        <alternativeName>
            <fullName evidence="1">Inosinicase</fullName>
        </alternativeName>
    </domain>
</protein>
<proteinExistence type="inferred from homology"/>
<reference key="1">
    <citation type="submission" date="2008-06" db="EMBL/GenBank/DDBJ databases">
        <title>Complete sequence of Stenotrophomonas maltophilia R551-3.</title>
        <authorList>
            <consortium name="US DOE Joint Genome Institute"/>
            <person name="Lucas S."/>
            <person name="Copeland A."/>
            <person name="Lapidus A."/>
            <person name="Glavina del Rio T."/>
            <person name="Dalin E."/>
            <person name="Tice H."/>
            <person name="Pitluck S."/>
            <person name="Chain P."/>
            <person name="Malfatti S."/>
            <person name="Shin M."/>
            <person name="Vergez L."/>
            <person name="Lang D."/>
            <person name="Schmutz J."/>
            <person name="Larimer F."/>
            <person name="Land M."/>
            <person name="Hauser L."/>
            <person name="Kyrpides N."/>
            <person name="Mikhailova N."/>
            <person name="Taghavi S."/>
            <person name="Monchy S."/>
            <person name="Newman L."/>
            <person name="Vangronsveld J."/>
            <person name="van der Lelie D."/>
            <person name="Richardson P."/>
        </authorList>
    </citation>
    <scope>NUCLEOTIDE SEQUENCE [LARGE SCALE GENOMIC DNA]</scope>
    <source>
        <strain>R551-3</strain>
    </source>
</reference>
<dbReference type="EC" id="2.1.2.3" evidence="1"/>
<dbReference type="EC" id="3.5.4.10" evidence="1"/>
<dbReference type="EMBL" id="CP001111">
    <property type="protein sequence ID" value="ACF53361.1"/>
    <property type="molecule type" value="Genomic_DNA"/>
</dbReference>
<dbReference type="RefSeq" id="WP_012512279.1">
    <property type="nucleotide sequence ID" value="NC_011071.1"/>
</dbReference>
<dbReference type="SMR" id="B4SL92"/>
<dbReference type="STRING" id="391008.Smal_3662"/>
<dbReference type="KEGG" id="smt:Smal_3662"/>
<dbReference type="eggNOG" id="COG0138">
    <property type="taxonomic scope" value="Bacteria"/>
</dbReference>
<dbReference type="HOGENOM" id="CLU_016316_5_2_6"/>
<dbReference type="OrthoDB" id="9802065at2"/>
<dbReference type="UniPathway" id="UPA00074">
    <property type="reaction ID" value="UER00133"/>
</dbReference>
<dbReference type="UniPathway" id="UPA00074">
    <property type="reaction ID" value="UER00135"/>
</dbReference>
<dbReference type="Proteomes" id="UP000001867">
    <property type="component" value="Chromosome"/>
</dbReference>
<dbReference type="GO" id="GO:0005829">
    <property type="term" value="C:cytosol"/>
    <property type="evidence" value="ECO:0007669"/>
    <property type="project" value="TreeGrafter"/>
</dbReference>
<dbReference type="GO" id="GO:0003937">
    <property type="term" value="F:IMP cyclohydrolase activity"/>
    <property type="evidence" value="ECO:0007669"/>
    <property type="project" value="UniProtKB-UniRule"/>
</dbReference>
<dbReference type="GO" id="GO:0004643">
    <property type="term" value="F:phosphoribosylaminoimidazolecarboxamide formyltransferase activity"/>
    <property type="evidence" value="ECO:0007669"/>
    <property type="project" value="UniProtKB-UniRule"/>
</dbReference>
<dbReference type="GO" id="GO:0006189">
    <property type="term" value="P:'de novo' IMP biosynthetic process"/>
    <property type="evidence" value="ECO:0007669"/>
    <property type="project" value="UniProtKB-UniRule"/>
</dbReference>
<dbReference type="CDD" id="cd01421">
    <property type="entry name" value="IMPCH"/>
    <property type="match status" value="1"/>
</dbReference>
<dbReference type="FunFam" id="3.40.140.20:FF:000001">
    <property type="entry name" value="Bifunctional purine biosynthesis protein PurH"/>
    <property type="match status" value="1"/>
</dbReference>
<dbReference type="FunFam" id="3.40.140.20:FF:000002">
    <property type="entry name" value="Bifunctional purine biosynthesis protein PurH"/>
    <property type="match status" value="1"/>
</dbReference>
<dbReference type="FunFam" id="3.40.50.1380:FF:000001">
    <property type="entry name" value="Bifunctional purine biosynthesis protein PurH"/>
    <property type="match status" value="1"/>
</dbReference>
<dbReference type="Gene3D" id="3.40.140.20">
    <property type="match status" value="2"/>
</dbReference>
<dbReference type="Gene3D" id="3.40.50.1380">
    <property type="entry name" value="Methylglyoxal synthase-like domain"/>
    <property type="match status" value="1"/>
</dbReference>
<dbReference type="HAMAP" id="MF_00139">
    <property type="entry name" value="PurH"/>
    <property type="match status" value="1"/>
</dbReference>
<dbReference type="InterPro" id="IPR024051">
    <property type="entry name" value="AICAR_Tfase_dup_dom_sf"/>
</dbReference>
<dbReference type="InterPro" id="IPR016193">
    <property type="entry name" value="Cytidine_deaminase-like"/>
</dbReference>
<dbReference type="InterPro" id="IPR011607">
    <property type="entry name" value="MGS-like_dom"/>
</dbReference>
<dbReference type="InterPro" id="IPR036914">
    <property type="entry name" value="MGS-like_dom_sf"/>
</dbReference>
<dbReference type="InterPro" id="IPR002695">
    <property type="entry name" value="PurH-like"/>
</dbReference>
<dbReference type="NCBIfam" id="NF002049">
    <property type="entry name" value="PRK00881.1"/>
    <property type="match status" value="1"/>
</dbReference>
<dbReference type="NCBIfam" id="TIGR00355">
    <property type="entry name" value="purH"/>
    <property type="match status" value="1"/>
</dbReference>
<dbReference type="PANTHER" id="PTHR11692:SF0">
    <property type="entry name" value="BIFUNCTIONAL PURINE BIOSYNTHESIS PROTEIN ATIC"/>
    <property type="match status" value="1"/>
</dbReference>
<dbReference type="PANTHER" id="PTHR11692">
    <property type="entry name" value="BIFUNCTIONAL PURINE BIOSYNTHESIS PROTEIN PURH"/>
    <property type="match status" value="1"/>
</dbReference>
<dbReference type="Pfam" id="PF01808">
    <property type="entry name" value="AICARFT_IMPCHas"/>
    <property type="match status" value="1"/>
</dbReference>
<dbReference type="Pfam" id="PF02142">
    <property type="entry name" value="MGS"/>
    <property type="match status" value="1"/>
</dbReference>
<dbReference type="PIRSF" id="PIRSF000414">
    <property type="entry name" value="AICARFT_IMPCHas"/>
    <property type="match status" value="1"/>
</dbReference>
<dbReference type="SMART" id="SM00798">
    <property type="entry name" value="AICARFT_IMPCHas"/>
    <property type="match status" value="1"/>
</dbReference>
<dbReference type="SMART" id="SM00851">
    <property type="entry name" value="MGS"/>
    <property type="match status" value="1"/>
</dbReference>
<dbReference type="SUPFAM" id="SSF53927">
    <property type="entry name" value="Cytidine deaminase-like"/>
    <property type="match status" value="1"/>
</dbReference>
<dbReference type="SUPFAM" id="SSF52335">
    <property type="entry name" value="Methylglyoxal synthase-like"/>
    <property type="match status" value="1"/>
</dbReference>
<dbReference type="PROSITE" id="PS51855">
    <property type="entry name" value="MGS"/>
    <property type="match status" value="1"/>
</dbReference>
<evidence type="ECO:0000255" key="1">
    <source>
        <dbReference type="HAMAP-Rule" id="MF_00139"/>
    </source>
</evidence>
<evidence type="ECO:0000255" key="2">
    <source>
        <dbReference type="PROSITE-ProRule" id="PRU01202"/>
    </source>
</evidence>
<accession>B4SL92</accession>
<gene>
    <name evidence="1" type="primary">purH</name>
    <name type="ordered locus">Smal_3662</name>
</gene>
<keyword id="KW-0378">Hydrolase</keyword>
<keyword id="KW-0511">Multifunctional enzyme</keyword>
<keyword id="KW-0658">Purine biosynthesis</keyword>
<keyword id="KW-0808">Transferase</keyword>
<comment type="catalytic activity">
    <reaction evidence="1">
        <text>(6R)-10-formyltetrahydrofolate + 5-amino-1-(5-phospho-beta-D-ribosyl)imidazole-4-carboxamide = 5-formamido-1-(5-phospho-D-ribosyl)imidazole-4-carboxamide + (6S)-5,6,7,8-tetrahydrofolate</text>
        <dbReference type="Rhea" id="RHEA:22192"/>
        <dbReference type="ChEBI" id="CHEBI:57453"/>
        <dbReference type="ChEBI" id="CHEBI:58467"/>
        <dbReference type="ChEBI" id="CHEBI:58475"/>
        <dbReference type="ChEBI" id="CHEBI:195366"/>
        <dbReference type="EC" id="2.1.2.3"/>
    </reaction>
</comment>
<comment type="catalytic activity">
    <reaction evidence="1">
        <text>IMP + H2O = 5-formamido-1-(5-phospho-D-ribosyl)imidazole-4-carboxamide</text>
        <dbReference type="Rhea" id="RHEA:18445"/>
        <dbReference type="ChEBI" id="CHEBI:15377"/>
        <dbReference type="ChEBI" id="CHEBI:58053"/>
        <dbReference type="ChEBI" id="CHEBI:58467"/>
        <dbReference type="EC" id="3.5.4.10"/>
    </reaction>
</comment>
<comment type="pathway">
    <text evidence="1">Purine metabolism; IMP biosynthesis via de novo pathway; 5-formamido-1-(5-phospho-D-ribosyl)imidazole-4-carboxamide from 5-amino-1-(5-phospho-D-ribosyl)imidazole-4-carboxamide (10-formyl THF route): step 1/1.</text>
</comment>
<comment type="pathway">
    <text evidence="1">Purine metabolism; IMP biosynthesis via de novo pathway; IMP from 5-formamido-1-(5-phospho-D-ribosyl)imidazole-4-carboxamide: step 1/1.</text>
</comment>
<comment type="domain">
    <text evidence="1">The IMP cyclohydrolase activity resides in the N-terminal region.</text>
</comment>
<comment type="similarity">
    <text evidence="1">Belongs to the PurH family.</text>
</comment>
<feature type="chain" id="PRO_1000096098" description="Bifunctional purine biosynthesis protein PurH">
    <location>
        <begin position="1"/>
        <end position="527"/>
    </location>
</feature>
<feature type="domain" description="MGS-like" evidence="2">
    <location>
        <begin position="1"/>
        <end position="149"/>
    </location>
</feature>
<name>PUR9_STRM5</name>